<proteinExistence type="inferred from homology"/>
<name>NADK_PARUW</name>
<reference key="1">
    <citation type="journal article" date="2004" name="Science">
        <title>Illuminating the evolutionary history of chlamydiae.</title>
        <authorList>
            <person name="Horn M."/>
            <person name="Collingro A."/>
            <person name="Schmitz-Esser S."/>
            <person name="Beier C.L."/>
            <person name="Purkhold U."/>
            <person name="Fartmann B."/>
            <person name="Brandt P."/>
            <person name="Nyakatura G.J."/>
            <person name="Droege M."/>
            <person name="Frishman D."/>
            <person name="Rattei T."/>
            <person name="Mewes H.-W."/>
            <person name="Wagner M."/>
        </authorList>
    </citation>
    <scope>NUCLEOTIDE SEQUENCE [LARGE SCALE GENOMIC DNA]</scope>
    <source>
        <strain>UWE25</strain>
    </source>
</reference>
<keyword id="KW-0067">ATP-binding</keyword>
<keyword id="KW-0963">Cytoplasm</keyword>
<keyword id="KW-0418">Kinase</keyword>
<keyword id="KW-0520">NAD</keyword>
<keyword id="KW-0521">NADP</keyword>
<keyword id="KW-0547">Nucleotide-binding</keyword>
<keyword id="KW-1185">Reference proteome</keyword>
<keyword id="KW-0808">Transferase</keyword>
<protein>
    <recommendedName>
        <fullName evidence="1">NAD kinase</fullName>
        <ecNumber evidence="1">2.7.1.23</ecNumber>
    </recommendedName>
    <alternativeName>
        <fullName evidence="1">ATP-dependent NAD kinase</fullName>
    </alternativeName>
</protein>
<gene>
    <name evidence="1" type="primary">nadK</name>
    <name type="ordered locus">pc0618</name>
</gene>
<sequence length="279" mass="30646">MIALFPNESKDPSLKIAAEICQFLISRNIEITAEDKHAKQLNVFPLSQVNVQHINFRISLGGDGTILRLIHKHPTIHAPLLGINLGSLGFLADIPLDGIFPSLEDLIKGRYRVQKRMMVEGSVLCKPSCFAVNEVVIHRAQNPCLIDLAIYVDGNYLNTFSADGMIISTPSGSTAYSLAAGGPILTPELKAFVLTPICPHTISNRPIVLMPEISIQVKYLSSYAPVEVSSDGISSFSLSTNEIFHASISSQTFDLVCLERHDYFATLREKLGWQGKLKI</sequence>
<evidence type="ECO:0000255" key="1">
    <source>
        <dbReference type="HAMAP-Rule" id="MF_00361"/>
    </source>
</evidence>
<accession>Q6MDK7</accession>
<organism>
    <name type="scientific">Protochlamydia amoebophila (strain UWE25)</name>
    <dbReference type="NCBI Taxonomy" id="264201"/>
    <lineage>
        <taxon>Bacteria</taxon>
        <taxon>Pseudomonadati</taxon>
        <taxon>Chlamydiota</taxon>
        <taxon>Chlamydiia</taxon>
        <taxon>Parachlamydiales</taxon>
        <taxon>Parachlamydiaceae</taxon>
        <taxon>Candidatus Protochlamydia</taxon>
    </lineage>
</organism>
<feature type="chain" id="PRO_0000229661" description="NAD kinase">
    <location>
        <begin position="1"/>
        <end position="279"/>
    </location>
</feature>
<feature type="active site" description="Proton acceptor" evidence="1">
    <location>
        <position position="63"/>
    </location>
</feature>
<feature type="binding site" evidence="1">
    <location>
        <begin position="63"/>
        <end position="64"/>
    </location>
    <ligand>
        <name>NAD(+)</name>
        <dbReference type="ChEBI" id="CHEBI:57540"/>
    </ligand>
</feature>
<feature type="binding site" evidence="1">
    <location>
        <position position="68"/>
    </location>
    <ligand>
        <name>NAD(+)</name>
        <dbReference type="ChEBI" id="CHEBI:57540"/>
    </ligand>
</feature>
<feature type="binding site" evidence="1">
    <location>
        <begin position="133"/>
        <end position="134"/>
    </location>
    <ligand>
        <name>NAD(+)</name>
        <dbReference type="ChEBI" id="CHEBI:57540"/>
    </ligand>
</feature>
<feature type="binding site" evidence="1">
    <location>
        <position position="163"/>
    </location>
    <ligand>
        <name>NAD(+)</name>
        <dbReference type="ChEBI" id="CHEBI:57540"/>
    </ligand>
</feature>
<dbReference type="EC" id="2.7.1.23" evidence="1"/>
<dbReference type="EMBL" id="BX908798">
    <property type="protein sequence ID" value="CAF23342.1"/>
    <property type="molecule type" value="Genomic_DNA"/>
</dbReference>
<dbReference type="SMR" id="Q6MDK7"/>
<dbReference type="STRING" id="264201.pc0618"/>
<dbReference type="eggNOG" id="COG0061">
    <property type="taxonomic scope" value="Bacteria"/>
</dbReference>
<dbReference type="HOGENOM" id="CLU_008831_0_1_0"/>
<dbReference type="Proteomes" id="UP000000529">
    <property type="component" value="Chromosome"/>
</dbReference>
<dbReference type="GO" id="GO:0005737">
    <property type="term" value="C:cytoplasm"/>
    <property type="evidence" value="ECO:0007669"/>
    <property type="project" value="UniProtKB-SubCell"/>
</dbReference>
<dbReference type="GO" id="GO:0005524">
    <property type="term" value="F:ATP binding"/>
    <property type="evidence" value="ECO:0007669"/>
    <property type="project" value="UniProtKB-KW"/>
</dbReference>
<dbReference type="GO" id="GO:0046872">
    <property type="term" value="F:metal ion binding"/>
    <property type="evidence" value="ECO:0007669"/>
    <property type="project" value="UniProtKB-UniRule"/>
</dbReference>
<dbReference type="GO" id="GO:0051287">
    <property type="term" value="F:NAD binding"/>
    <property type="evidence" value="ECO:0007669"/>
    <property type="project" value="UniProtKB-ARBA"/>
</dbReference>
<dbReference type="GO" id="GO:0003951">
    <property type="term" value="F:NAD+ kinase activity"/>
    <property type="evidence" value="ECO:0007669"/>
    <property type="project" value="UniProtKB-UniRule"/>
</dbReference>
<dbReference type="GO" id="GO:0019674">
    <property type="term" value="P:NAD metabolic process"/>
    <property type="evidence" value="ECO:0007669"/>
    <property type="project" value="InterPro"/>
</dbReference>
<dbReference type="GO" id="GO:0006741">
    <property type="term" value="P:NADP biosynthetic process"/>
    <property type="evidence" value="ECO:0007669"/>
    <property type="project" value="UniProtKB-UniRule"/>
</dbReference>
<dbReference type="Gene3D" id="3.40.50.10330">
    <property type="entry name" value="Probable inorganic polyphosphate/atp-NAD kinase, domain 1"/>
    <property type="match status" value="1"/>
</dbReference>
<dbReference type="Gene3D" id="2.60.200.30">
    <property type="entry name" value="Probable inorganic polyphosphate/atp-NAD kinase, domain 2"/>
    <property type="match status" value="1"/>
</dbReference>
<dbReference type="HAMAP" id="MF_00361">
    <property type="entry name" value="NAD_kinase"/>
    <property type="match status" value="1"/>
</dbReference>
<dbReference type="InterPro" id="IPR017438">
    <property type="entry name" value="ATP-NAD_kinase_N"/>
</dbReference>
<dbReference type="InterPro" id="IPR017437">
    <property type="entry name" value="ATP-NAD_kinase_PpnK-typ_C"/>
</dbReference>
<dbReference type="InterPro" id="IPR016064">
    <property type="entry name" value="NAD/diacylglycerol_kinase_sf"/>
</dbReference>
<dbReference type="InterPro" id="IPR002504">
    <property type="entry name" value="NADK"/>
</dbReference>
<dbReference type="PANTHER" id="PTHR20275">
    <property type="entry name" value="NAD KINASE"/>
    <property type="match status" value="1"/>
</dbReference>
<dbReference type="PANTHER" id="PTHR20275:SF0">
    <property type="entry name" value="NAD KINASE"/>
    <property type="match status" value="1"/>
</dbReference>
<dbReference type="Pfam" id="PF01513">
    <property type="entry name" value="NAD_kinase"/>
    <property type="match status" value="1"/>
</dbReference>
<dbReference type="Pfam" id="PF20143">
    <property type="entry name" value="NAD_kinase_C"/>
    <property type="match status" value="1"/>
</dbReference>
<dbReference type="SUPFAM" id="SSF111331">
    <property type="entry name" value="NAD kinase/diacylglycerol kinase-like"/>
    <property type="match status" value="1"/>
</dbReference>
<comment type="function">
    <text evidence="1">Involved in the regulation of the intracellular balance of NAD and NADP, and is a key enzyme in the biosynthesis of NADP. Catalyzes specifically the phosphorylation on 2'-hydroxyl of the adenosine moiety of NAD to yield NADP.</text>
</comment>
<comment type="catalytic activity">
    <reaction evidence="1">
        <text>NAD(+) + ATP = ADP + NADP(+) + H(+)</text>
        <dbReference type="Rhea" id="RHEA:18629"/>
        <dbReference type="ChEBI" id="CHEBI:15378"/>
        <dbReference type="ChEBI" id="CHEBI:30616"/>
        <dbReference type="ChEBI" id="CHEBI:57540"/>
        <dbReference type="ChEBI" id="CHEBI:58349"/>
        <dbReference type="ChEBI" id="CHEBI:456216"/>
        <dbReference type="EC" id="2.7.1.23"/>
    </reaction>
</comment>
<comment type="cofactor">
    <cofactor evidence="1">
        <name>a divalent metal cation</name>
        <dbReference type="ChEBI" id="CHEBI:60240"/>
    </cofactor>
</comment>
<comment type="subcellular location">
    <subcellularLocation>
        <location evidence="1">Cytoplasm</location>
    </subcellularLocation>
</comment>
<comment type="similarity">
    <text evidence="1">Belongs to the NAD kinase family.</text>
</comment>